<accession>F4JV59</accession>
<accession>Q9M078</accession>
<name>CABIN_ARATH</name>
<proteinExistence type="evidence at protein level"/>
<dbReference type="EMBL" id="AL161582">
    <property type="protein sequence ID" value="CAB79999.1"/>
    <property type="status" value="ALT_SEQ"/>
    <property type="molecule type" value="Genomic_DNA"/>
</dbReference>
<dbReference type="EMBL" id="CP002687">
    <property type="protein sequence ID" value="AEE86122.1"/>
    <property type="molecule type" value="Genomic_DNA"/>
</dbReference>
<dbReference type="PIR" id="T10689">
    <property type="entry name" value="T10689"/>
</dbReference>
<dbReference type="RefSeq" id="NP_195008.6">
    <property type="nucleotide sequence ID" value="NM_119435.7"/>
</dbReference>
<dbReference type="SMR" id="F4JV59"/>
<dbReference type="FunCoup" id="F4JV59">
    <property type="interactions" value="1329"/>
</dbReference>
<dbReference type="STRING" id="3702.F4JV59"/>
<dbReference type="GlyGen" id="F4JV59">
    <property type="glycosylation" value="3 sites"/>
</dbReference>
<dbReference type="iPTMnet" id="F4JV59"/>
<dbReference type="PaxDb" id="3702-AT4G32820.2"/>
<dbReference type="ProteomicsDB" id="240540"/>
<dbReference type="EnsemblPlants" id="AT4G32820.1">
    <property type="protein sequence ID" value="AT4G32820.1"/>
    <property type="gene ID" value="AT4G32820"/>
</dbReference>
<dbReference type="GeneID" id="829418"/>
<dbReference type="Gramene" id="AT4G32820.1">
    <property type="protein sequence ID" value="AT4G32820.1"/>
    <property type="gene ID" value="AT4G32820"/>
</dbReference>
<dbReference type="KEGG" id="ath:AT4G32820"/>
<dbReference type="Araport" id="AT4G32820"/>
<dbReference type="TAIR" id="AT4G32820">
    <property type="gene designation" value="CABIN1"/>
</dbReference>
<dbReference type="HOGENOM" id="CLU_002326_0_0_1"/>
<dbReference type="InParanoid" id="F4JV59"/>
<dbReference type="PRO" id="PR:F4JV59"/>
<dbReference type="Proteomes" id="UP000006548">
    <property type="component" value="Chromosome 4"/>
</dbReference>
<dbReference type="ExpressionAtlas" id="F4JV59">
    <property type="expression patterns" value="baseline and differential"/>
</dbReference>
<dbReference type="GO" id="GO:0005634">
    <property type="term" value="C:nucleus"/>
    <property type="evidence" value="ECO:0007669"/>
    <property type="project" value="UniProtKB-SubCell"/>
</dbReference>
<dbReference type="GO" id="GO:0006325">
    <property type="term" value="P:chromatin organization"/>
    <property type="evidence" value="ECO:0007669"/>
    <property type="project" value="UniProtKB-KW"/>
</dbReference>
<dbReference type="FunFam" id="1.25.40.10:FF:000431">
    <property type="entry name" value="Tetratricopeptide repeat (TPR)-like superfamily protein"/>
    <property type="match status" value="1"/>
</dbReference>
<dbReference type="Gene3D" id="1.25.40.10">
    <property type="entry name" value="Tetratricopeptide repeat domain"/>
    <property type="match status" value="1"/>
</dbReference>
<dbReference type="InterPro" id="IPR033053">
    <property type="entry name" value="Hir3/CABIN1"/>
</dbReference>
<dbReference type="InterPro" id="IPR011990">
    <property type="entry name" value="TPR-like_helical_dom_sf"/>
</dbReference>
<dbReference type="PANTHER" id="PTHR15502">
    <property type="entry name" value="CALCINEURIN-BINDING PROTEIN CABIN 1-RELATED"/>
    <property type="match status" value="1"/>
</dbReference>
<dbReference type="PANTHER" id="PTHR15502:SF7">
    <property type="entry name" value="CALCINEURIN-BINDING PROTEIN CABIN-1"/>
    <property type="match status" value="1"/>
</dbReference>
<dbReference type="SUPFAM" id="SSF48452">
    <property type="entry name" value="TPR-like"/>
    <property type="match status" value="1"/>
</dbReference>
<dbReference type="PROSITE" id="PS50293">
    <property type="entry name" value="TPR_REGION"/>
    <property type="match status" value="2"/>
</dbReference>
<gene>
    <name evidence="6 7" type="primary">CABIN1</name>
    <name evidence="9" type="ordered locus">At4g32820</name>
    <name evidence="10" type="ORF">T16I18.30</name>
</gene>
<evidence type="ECO:0000250" key="1">
    <source>
        <dbReference type="UniProtKB" id="Q9Y6J0"/>
    </source>
</evidence>
<evidence type="ECO:0000255" key="2"/>
<evidence type="ECO:0000256" key="3">
    <source>
        <dbReference type="SAM" id="MobiDB-lite"/>
    </source>
</evidence>
<evidence type="ECO:0000269" key="4">
    <source>
    </source>
</evidence>
<evidence type="ECO:0000269" key="5">
    <source>
    </source>
</evidence>
<evidence type="ECO:0000303" key="6">
    <source>
    </source>
</evidence>
<evidence type="ECO:0000303" key="7">
    <source>
    </source>
</evidence>
<evidence type="ECO:0000305" key="8"/>
<evidence type="ECO:0000312" key="9">
    <source>
        <dbReference type="Araport" id="AT4G32820"/>
    </source>
</evidence>
<evidence type="ECO:0000312" key="10">
    <source>
        <dbReference type="EMBL" id="CAB79999.1"/>
    </source>
</evidence>
<protein>
    <recommendedName>
        <fullName evidence="6 7">Calcineurin-binding protein 1</fullName>
        <shortName evidence="6">AtCABIN1</shortName>
    </recommendedName>
</protein>
<reference key="1">
    <citation type="journal article" date="1999" name="Nature">
        <title>Sequence and analysis of chromosome 4 of the plant Arabidopsis thaliana.</title>
        <authorList>
            <person name="Mayer K.F.X."/>
            <person name="Schueller C."/>
            <person name="Wambutt R."/>
            <person name="Murphy G."/>
            <person name="Volckaert G."/>
            <person name="Pohl T."/>
            <person name="Duesterhoeft A."/>
            <person name="Stiekema W."/>
            <person name="Entian K.-D."/>
            <person name="Terryn N."/>
            <person name="Harris B."/>
            <person name="Ansorge W."/>
            <person name="Brandt P."/>
            <person name="Grivell L.A."/>
            <person name="Rieger M."/>
            <person name="Weichselgartner M."/>
            <person name="de Simone V."/>
            <person name="Obermaier B."/>
            <person name="Mache R."/>
            <person name="Mueller M."/>
            <person name="Kreis M."/>
            <person name="Delseny M."/>
            <person name="Puigdomenech P."/>
            <person name="Watson M."/>
            <person name="Schmidtheini T."/>
            <person name="Reichert B."/>
            <person name="Portetelle D."/>
            <person name="Perez-Alonso M."/>
            <person name="Boutry M."/>
            <person name="Bancroft I."/>
            <person name="Vos P."/>
            <person name="Hoheisel J."/>
            <person name="Zimmermann W."/>
            <person name="Wedler H."/>
            <person name="Ridley P."/>
            <person name="Langham S.-A."/>
            <person name="McCullagh B."/>
            <person name="Bilham L."/>
            <person name="Robben J."/>
            <person name="van der Schueren J."/>
            <person name="Grymonprez B."/>
            <person name="Chuang Y.-J."/>
            <person name="Vandenbussche F."/>
            <person name="Braeken M."/>
            <person name="Weltjens I."/>
            <person name="Voet M."/>
            <person name="Bastiaens I."/>
            <person name="Aert R."/>
            <person name="Defoor E."/>
            <person name="Weitzenegger T."/>
            <person name="Bothe G."/>
            <person name="Ramsperger U."/>
            <person name="Hilbert H."/>
            <person name="Braun M."/>
            <person name="Holzer E."/>
            <person name="Brandt A."/>
            <person name="Peters S."/>
            <person name="van Staveren M."/>
            <person name="Dirkse W."/>
            <person name="Mooijman P."/>
            <person name="Klein Lankhorst R."/>
            <person name="Rose M."/>
            <person name="Hauf J."/>
            <person name="Koetter P."/>
            <person name="Berneiser S."/>
            <person name="Hempel S."/>
            <person name="Feldpausch M."/>
            <person name="Lamberth S."/>
            <person name="Van den Daele H."/>
            <person name="De Keyser A."/>
            <person name="Buysshaert C."/>
            <person name="Gielen J."/>
            <person name="Villarroel R."/>
            <person name="De Clercq R."/>
            <person name="van Montagu M."/>
            <person name="Rogers J."/>
            <person name="Cronin A."/>
            <person name="Quail M.A."/>
            <person name="Bray-Allen S."/>
            <person name="Clark L."/>
            <person name="Doggett J."/>
            <person name="Hall S."/>
            <person name="Kay M."/>
            <person name="Lennard N."/>
            <person name="McLay K."/>
            <person name="Mayes R."/>
            <person name="Pettett A."/>
            <person name="Rajandream M.A."/>
            <person name="Lyne M."/>
            <person name="Benes V."/>
            <person name="Rechmann S."/>
            <person name="Borkova D."/>
            <person name="Bloecker H."/>
            <person name="Scharfe M."/>
            <person name="Grimm M."/>
            <person name="Loehnert T.-H."/>
            <person name="Dose S."/>
            <person name="de Haan M."/>
            <person name="Maarse A.C."/>
            <person name="Schaefer M."/>
            <person name="Mueller-Auer S."/>
            <person name="Gabel C."/>
            <person name="Fuchs M."/>
            <person name="Fartmann B."/>
            <person name="Granderath K."/>
            <person name="Dauner D."/>
            <person name="Herzl A."/>
            <person name="Neumann S."/>
            <person name="Argiriou A."/>
            <person name="Vitale D."/>
            <person name="Liguori R."/>
            <person name="Piravandi E."/>
            <person name="Massenet O."/>
            <person name="Quigley F."/>
            <person name="Clabauld G."/>
            <person name="Muendlein A."/>
            <person name="Felber R."/>
            <person name="Schnabl S."/>
            <person name="Hiller R."/>
            <person name="Schmidt W."/>
            <person name="Lecharny A."/>
            <person name="Aubourg S."/>
            <person name="Chefdor F."/>
            <person name="Cooke R."/>
            <person name="Berger C."/>
            <person name="Monfort A."/>
            <person name="Casacuberta E."/>
            <person name="Gibbons T."/>
            <person name="Weber N."/>
            <person name="Vandenbol M."/>
            <person name="Bargues M."/>
            <person name="Terol J."/>
            <person name="Torres A."/>
            <person name="Perez-Perez A."/>
            <person name="Purnelle B."/>
            <person name="Bent E."/>
            <person name="Johnson S."/>
            <person name="Tacon D."/>
            <person name="Jesse T."/>
            <person name="Heijnen L."/>
            <person name="Schwarz S."/>
            <person name="Scholler P."/>
            <person name="Heber S."/>
            <person name="Francs P."/>
            <person name="Bielke C."/>
            <person name="Frishman D."/>
            <person name="Haase D."/>
            <person name="Lemcke K."/>
            <person name="Mewes H.-W."/>
            <person name="Stocker S."/>
            <person name="Zaccaria P."/>
            <person name="Bevan M."/>
            <person name="Wilson R.K."/>
            <person name="de la Bastide M."/>
            <person name="Habermann K."/>
            <person name="Parnell L."/>
            <person name="Dedhia N."/>
            <person name="Gnoj L."/>
            <person name="Schutz K."/>
            <person name="Huang E."/>
            <person name="Spiegel L."/>
            <person name="Sekhon M."/>
            <person name="Murray J."/>
            <person name="Sheet P."/>
            <person name="Cordes M."/>
            <person name="Abu-Threideh J."/>
            <person name="Stoneking T."/>
            <person name="Kalicki J."/>
            <person name="Graves T."/>
            <person name="Harmon G."/>
            <person name="Edwards J."/>
            <person name="Latreille P."/>
            <person name="Courtney L."/>
            <person name="Cloud J."/>
            <person name="Abbott A."/>
            <person name="Scott K."/>
            <person name="Johnson D."/>
            <person name="Minx P."/>
            <person name="Bentley D."/>
            <person name="Fulton B."/>
            <person name="Miller N."/>
            <person name="Greco T."/>
            <person name="Kemp K."/>
            <person name="Kramer J."/>
            <person name="Fulton L."/>
            <person name="Mardis E."/>
            <person name="Dante M."/>
            <person name="Pepin K."/>
            <person name="Hillier L.W."/>
            <person name="Nelson J."/>
            <person name="Spieth J."/>
            <person name="Ryan E."/>
            <person name="Andrews S."/>
            <person name="Geisel C."/>
            <person name="Layman D."/>
            <person name="Du H."/>
            <person name="Ali J."/>
            <person name="Berghoff A."/>
            <person name="Jones K."/>
            <person name="Drone K."/>
            <person name="Cotton M."/>
            <person name="Joshu C."/>
            <person name="Antonoiu B."/>
            <person name="Zidanic M."/>
            <person name="Strong C."/>
            <person name="Sun H."/>
            <person name="Lamar B."/>
            <person name="Yordan C."/>
            <person name="Ma P."/>
            <person name="Zhong J."/>
            <person name="Preston R."/>
            <person name="Vil D."/>
            <person name="Shekher M."/>
            <person name="Matero A."/>
            <person name="Shah R."/>
            <person name="Swaby I.K."/>
            <person name="O'Shaughnessy A."/>
            <person name="Rodriguez M."/>
            <person name="Hoffman J."/>
            <person name="Till S."/>
            <person name="Granat S."/>
            <person name="Shohdy N."/>
            <person name="Hasegawa A."/>
            <person name="Hameed A."/>
            <person name="Lodhi M."/>
            <person name="Johnson A."/>
            <person name="Chen E."/>
            <person name="Marra M.A."/>
            <person name="Martienssen R."/>
            <person name="McCombie W.R."/>
        </authorList>
    </citation>
    <scope>NUCLEOTIDE SEQUENCE [LARGE SCALE GENOMIC DNA]</scope>
    <source>
        <strain>cv. Columbia</strain>
    </source>
</reference>
<reference key="2">
    <citation type="journal article" date="2017" name="Plant J.">
        <title>Araport11: a complete reannotation of the Arabidopsis thaliana reference genome.</title>
        <authorList>
            <person name="Cheng C.Y."/>
            <person name="Krishnakumar V."/>
            <person name="Chan A.P."/>
            <person name="Thibaud-Nissen F."/>
            <person name="Schobel S."/>
            <person name="Town C.D."/>
        </authorList>
    </citation>
    <scope>GENOME REANNOTATION</scope>
    <source>
        <strain>cv. Columbia</strain>
    </source>
</reference>
<reference key="3">
    <citation type="journal article" date="2014" name="Biol. Open">
        <title>The HIRA complex that deposits the histone H3.3 is conserved in Arabidopsis and facilitates transcriptional dynamics.</title>
        <authorList>
            <person name="Nie X."/>
            <person name="Wang H."/>
            <person name="Li J."/>
            <person name="Holec S."/>
            <person name="Berger F."/>
        </authorList>
    </citation>
    <scope>DISRUPTION PHENOTYPE</scope>
    <scope>SUBUNIT</scope>
    <scope>GENE FAMILY</scope>
    <scope>NOMENCLATURE</scope>
</reference>
<reference key="4">
    <citation type="journal article" date="2015" name="Plant J.">
        <title>The histone chaperone complex HIR maintains nucleosome occupancy and counterbalances impaired histone deposition in CAF-1 complex mutants.</title>
        <authorList>
            <person name="Duc C."/>
            <person name="Benoit M."/>
            <person name="Le Goff S."/>
            <person name="Simon L."/>
            <person name="Poulet A."/>
            <person name="Cotterell S."/>
            <person name="Tatout C."/>
            <person name="Probst A.V."/>
        </authorList>
    </citation>
    <scope>SUBUNIT</scope>
    <scope>DISRUPTION PHENOTYPE</scope>
    <scope>TISSUE SPECIFICITY</scope>
</reference>
<sequence>MFSIAAINDTESTEKWEPLAPSKEAQEFHLSQTYHDGLLKLQAKDYDKARELLESILKDPIITNSKVETIANDNHLHHLRFLALKNLATVFLELGSSHYENALNCYLQAIDLDAKDSVLWNHLGTLSCSMGLLSISRWAFEQGLLCSPNNWNCMEKLLEVLIAVGDEVSCLSVANLILRHWPSHSRALHVKHCIEDTDSAPFAPKGIDKLEPQHVRLKFLGKRKVSDMNQDMDATSKKLRKRVQFKLPEASWVALLNILIGIVHPSRETVGISADIPITIELSLSTEAVMQGMKKKDHCVDSDSSNVSVKDCNIERESGGSVKEKEPVFSEEHPQERRSTRLERLRNQKPEKEGLEFDNSKDPSSDILQYLEKFVLKRGFDRESAGSFCNEESDPISEHAVVSNFVKENLENYGAYHMGHLLLEYIANKCEHVLSRETALKILELEKLTRHWGRDRKPECSLFLAELYHDFDSKRSDIPDAPSCMVEVTYHLSKIIESVSLDYAIDSTPSSRGKMFSDSSFKSFQGDEAAKEVLDYDTRSFWARYFWLSARLSILEDNKAKALEEYLRCLSLLGREGIGEAPVLIQRPHCRRVRELTINRIIHEINLLKIDFLLENNIPEMMEKEFYSECVNLLAPLLFPDKDILPAYAVKTEEGISSVELSALEVLIKACQKSKPIDVEVYMNCHRRKLQVLLDSTGTGESVVTPKTSSKNSSESWDHLVAEEVKAILLCISQVKNSLDQSGNSDDMVAPRDCVAGIQALLLRVMSNIVRHFFSKRYSDSQNADGIEEEKKSCFLDAAIGFCKLQHLDATISTKYQVELIIRLHDLLAEYGLCCAGKNCAGEEGAFLRFAIKHLLAVDMKVKSSINSPDGLGHDMGLPDKLCRNEVKSFLEEVHVEKNENNKTESKKDGSEEQVGYREKEQSEQQSKQIPEHTEEVAEEEKDELELLINNALDQCFFCLYGLNLRVDGSYEDELAVHKNTSRGDYQTKEQCVDVFQYILPYAKASSRTGLVKLRRVLRAIKKHFSQPPDDLLIGNVIDKFLDDPELCEDKLSYEAGSEGFLETITKCLIPSRTLSEYKISLLHSSDPYLDVYRNLYFLLAQSEEVSASDKWPGFVLTKEGEEFEQQNTNLFKYDLLYNPLRFESWEKLGNIYDEEVDLLLNDGSKHINVVGWRKNSALSQRVETSRRRSRRCLLMSLALANSPDQQSEIHELLALVYYDSLQSVVPFYDQRSVLPSKDATWTRFCENSMKHFNKAFSHRQDWSHAFYMGKLSEKLGHSYEISLSYYKQAMTLNPSAVDPVYRMHASRLKLLNACGKQNLEALKVLASYCFDESIKDTAMTIIGTTTFGSSRTLEEAQDGNLEACYAKSGEGSIQMEGVWHMLYNDSLSALGICVEGDLKHFHKARYMLAQGLYRRGGSSDLQRAKEELSFCFKSSRSSFTINMWEIDGMVKKGRRKTPGLAGNKKALEVNLPESSRKFITCIRKYLLFYLRLLEETEDVNTLERAFNSLRSDKRFSLCVEDLVPVAIGRYVKALVSSMSRVESAGAIINPDSQLEKIFSLFIEQGSIWPDICNFPETRGPETSESSLYRYLHQYIVSLELDNKVETLETINEKIRKRFKNPKLSNSFSAKVGRHASLAWCRALIISLALITPLQPVSSEESQAITPSFGLLENRRVLCVDLQSEFWSSSFEDPLESQMLEAKWRPVLSKIKNVLIFNKVVEGNLEIANSLLKSCYNFFRETASVTLPSDINLYFALPRLAPAGELLPGNEGVEVIDVSIPRKLLLWAYTLFHGHCGSISQVVKYMEENTKPKMKRGASTSSVVPSVQSGGTSEPEPAPKVVQVIIPDSLGGDSCGSTPAAPL</sequence>
<feature type="chain" id="PRO_0000444035" description="Calcineurin-binding protein 1">
    <location>
        <begin position="1"/>
        <end position="1863"/>
    </location>
</feature>
<feature type="repeat" description="TPR 1" evidence="2">
    <location>
        <begin position="30"/>
        <end position="65"/>
    </location>
</feature>
<feature type="repeat" description="TPR 2" evidence="2">
    <location>
        <begin position="81"/>
        <end position="116"/>
    </location>
</feature>
<feature type="repeat" description="TPR 3" evidence="2">
    <location>
        <begin position="118"/>
        <end position="150"/>
    </location>
</feature>
<feature type="repeat" description="TPR 4" evidence="2">
    <location>
        <begin position="543"/>
        <end position="576"/>
    </location>
</feature>
<feature type="repeat" description="TPR 5" evidence="2">
    <location>
        <begin position="602"/>
        <end position="637"/>
    </location>
</feature>
<feature type="repeat" description="TPR 6" evidence="2">
    <location>
        <begin position="866"/>
        <end position="900"/>
    </location>
</feature>
<feature type="repeat" description="TPR 7" evidence="2">
    <location>
        <begin position="955"/>
        <end position="988"/>
    </location>
</feature>
<feature type="repeat" description="TPR 8" evidence="2">
    <location>
        <begin position="990"/>
        <end position="1009"/>
    </location>
</feature>
<feature type="repeat" description="TPR 9" evidence="2">
    <location>
        <begin position="1011"/>
        <end position="1031"/>
    </location>
</feature>
<feature type="repeat" description="TPR 10" evidence="2">
    <location>
        <begin position="1143"/>
        <end position="1183"/>
    </location>
</feature>
<feature type="repeat" description="TPR 11" evidence="2">
    <location>
        <begin position="1226"/>
        <end position="1263"/>
    </location>
</feature>
<feature type="repeat" description="TPR 12" evidence="2">
    <location>
        <begin position="1264"/>
        <end position="1297"/>
    </location>
</feature>
<feature type="repeat" description="TPR 13" evidence="2">
    <location>
        <begin position="1306"/>
        <end position="1339"/>
    </location>
</feature>
<feature type="repeat" description="TPR 14" evidence="2">
    <location>
        <begin position="1377"/>
        <end position="1412"/>
    </location>
</feature>
<feature type="repeat" description="TPR 15" evidence="2">
    <location>
        <begin position="1508"/>
        <end position="1541"/>
    </location>
</feature>
<feature type="region of interest" description="Disordered" evidence="3">
    <location>
        <begin position="315"/>
        <end position="361"/>
    </location>
</feature>
<feature type="region of interest" description="Disordered" evidence="3">
    <location>
        <begin position="894"/>
        <end position="941"/>
    </location>
</feature>
<feature type="region of interest" description="Disordered" evidence="3">
    <location>
        <begin position="1813"/>
        <end position="1840"/>
    </location>
</feature>
<feature type="compositionally biased region" description="Basic and acidic residues" evidence="3">
    <location>
        <begin position="894"/>
        <end position="923"/>
    </location>
</feature>
<feature type="compositionally biased region" description="Polar residues" evidence="3">
    <location>
        <begin position="1818"/>
        <end position="1832"/>
    </location>
</feature>
<comment type="function">
    <text evidence="1">May be required for replication-independent chromatin assembly.</text>
</comment>
<comment type="subunit">
    <text evidence="4 5">Component of the HIRA complex made of UBN1, UBN2, ASF1A, CABIN1 and HIRA.</text>
</comment>
<comment type="subcellular location">
    <subcellularLocation>
        <location evidence="8">Nucleus</location>
    </subcellularLocation>
</comment>
<comment type="tissue specificity">
    <text evidence="5">Expressed at low levels in seedlings.</text>
</comment>
<comment type="disruption phenotype">
    <text evidence="4 5">No visible phenotype (PubMed:25086063, PubMed:25600486). The double mutant hira-1 cabin1-2 has aborted and fewer viable seeds (PubMed:25600486).</text>
</comment>
<comment type="sequence caution" evidence="8">
    <conflict type="erroneous gene model prediction">
        <sequence resource="EMBL-CDS" id="CAB79999"/>
    </conflict>
</comment>
<organism>
    <name type="scientific">Arabidopsis thaliana</name>
    <name type="common">Mouse-ear cress</name>
    <dbReference type="NCBI Taxonomy" id="3702"/>
    <lineage>
        <taxon>Eukaryota</taxon>
        <taxon>Viridiplantae</taxon>
        <taxon>Streptophyta</taxon>
        <taxon>Embryophyta</taxon>
        <taxon>Tracheophyta</taxon>
        <taxon>Spermatophyta</taxon>
        <taxon>Magnoliopsida</taxon>
        <taxon>eudicotyledons</taxon>
        <taxon>Gunneridae</taxon>
        <taxon>Pentapetalae</taxon>
        <taxon>rosids</taxon>
        <taxon>malvids</taxon>
        <taxon>Brassicales</taxon>
        <taxon>Brassicaceae</taxon>
        <taxon>Camelineae</taxon>
        <taxon>Arabidopsis</taxon>
    </lineage>
</organism>
<keyword id="KW-0156">Chromatin regulator</keyword>
<keyword id="KW-0539">Nucleus</keyword>
<keyword id="KW-1185">Reference proteome</keyword>
<keyword id="KW-0677">Repeat</keyword>
<keyword id="KW-0802">TPR repeat</keyword>